<evidence type="ECO:0000255" key="1">
    <source>
        <dbReference type="HAMAP-Rule" id="MF_00165"/>
    </source>
</evidence>
<feature type="chain" id="PRO_1000023147" description="Thymidylate kinase">
    <location>
        <begin position="1"/>
        <end position="208"/>
    </location>
</feature>
<feature type="binding site" evidence="1">
    <location>
        <begin position="10"/>
        <end position="17"/>
    </location>
    <ligand>
        <name>ATP</name>
        <dbReference type="ChEBI" id="CHEBI:30616"/>
    </ligand>
</feature>
<keyword id="KW-0067">ATP-binding</keyword>
<keyword id="KW-0418">Kinase</keyword>
<keyword id="KW-0545">Nucleotide biosynthesis</keyword>
<keyword id="KW-0547">Nucleotide-binding</keyword>
<keyword id="KW-0808">Transferase</keyword>
<reference key="1">
    <citation type="journal article" date="2007" name="J. Bacteriol.">
        <title>The complete genome sequence of Bacillus thuringiensis Al Hakam.</title>
        <authorList>
            <person name="Challacombe J.F."/>
            <person name="Altherr M.R."/>
            <person name="Xie G."/>
            <person name="Bhotika S.S."/>
            <person name="Brown N."/>
            <person name="Bruce D."/>
            <person name="Campbell C.S."/>
            <person name="Campbell M.L."/>
            <person name="Chen J."/>
            <person name="Chertkov O."/>
            <person name="Cleland C."/>
            <person name="Dimitrijevic M."/>
            <person name="Doggett N.A."/>
            <person name="Fawcett J.J."/>
            <person name="Glavina T."/>
            <person name="Goodwin L.A."/>
            <person name="Green L.D."/>
            <person name="Han C.S."/>
            <person name="Hill K.K."/>
            <person name="Hitchcock P."/>
            <person name="Jackson P.J."/>
            <person name="Keim P."/>
            <person name="Kewalramani A.R."/>
            <person name="Longmire J."/>
            <person name="Lucas S."/>
            <person name="Malfatti S."/>
            <person name="Martinez D."/>
            <person name="McMurry K."/>
            <person name="Meincke L.J."/>
            <person name="Misra M."/>
            <person name="Moseman B.L."/>
            <person name="Mundt M."/>
            <person name="Munk A.C."/>
            <person name="Okinaka R.T."/>
            <person name="Parson-Quintana B."/>
            <person name="Reilly L.P."/>
            <person name="Richardson P."/>
            <person name="Robinson D.L."/>
            <person name="Saunders E."/>
            <person name="Tapia R."/>
            <person name="Tesmer J.G."/>
            <person name="Thayer N."/>
            <person name="Thompson L.S."/>
            <person name="Tice H."/>
            <person name="Ticknor L.O."/>
            <person name="Wills P.L."/>
            <person name="Gilna P."/>
            <person name="Brettin T.S."/>
        </authorList>
    </citation>
    <scope>NUCLEOTIDE SEQUENCE [LARGE SCALE GENOMIC DNA]</scope>
    <source>
        <strain>Al Hakam</strain>
    </source>
</reference>
<accession>A0R8A3</accession>
<comment type="function">
    <text evidence="1">Phosphorylation of dTMP to form dTDP in both de novo and salvage pathways of dTTP synthesis.</text>
</comment>
<comment type="catalytic activity">
    <reaction evidence="1">
        <text>dTMP + ATP = dTDP + ADP</text>
        <dbReference type="Rhea" id="RHEA:13517"/>
        <dbReference type="ChEBI" id="CHEBI:30616"/>
        <dbReference type="ChEBI" id="CHEBI:58369"/>
        <dbReference type="ChEBI" id="CHEBI:63528"/>
        <dbReference type="ChEBI" id="CHEBI:456216"/>
        <dbReference type="EC" id="2.7.4.9"/>
    </reaction>
</comment>
<comment type="similarity">
    <text evidence="1">Belongs to the thymidylate kinase family.</text>
</comment>
<protein>
    <recommendedName>
        <fullName evidence="1">Thymidylate kinase</fullName>
        <ecNumber evidence="1">2.7.4.9</ecNumber>
    </recommendedName>
    <alternativeName>
        <fullName evidence="1">dTMP kinase</fullName>
    </alternativeName>
</protein>
<sequence>MKGLFVTIEGPEGSGKTTLIQSLLPYFEQKEQKVMATREPGGIAISEDIRTILHKQEYTMMEARTEALLYAAARRQHLVEKVMPALNDDYLVLCDRFIDSSLAYQGYARGLGMDKVFEINRFATEDCMPSLTIYLDIEPEVGLARIAKDAGREVNRLDMEDISFHKRVREGYLQVVERFSDRIVLVNADQPMEKLIEEVIQVIEDKLL</sequence>
<gene>
    <name evidence="1" type="primary">tmk</name>
    <name type="ordered locus">BALH_0026</name>
</gene>
<organism>
    <name type="scientific">Bacillus thuringiensis (strain Al Hakam)</name>
    <dbReference type="NCBI Taxonomy" id="412694"/>
    <lineage>
        <taxon>Bacteria</taxon>
        <taxon>Bacillati</taxon>
        <taxon>Bacillota</taxon>
        <taxon>Bacilli</taxon>
        <taxon>Bacillales</taxon>
        <taxon>Bacillaceae</taxon>
        <taxon>Bacillus</taxon>
        <taxon>Bacillus cereus group</taxon>
    </lineage>
</organism>
<name>KTHY_BACAH</name>
<dbReference type="EC" id="2.7.4.9" evidence="1"/>
<dbReference type="EMBL" id="CP000485">
    <property type="protein sequence ID" value="ABK83446.1"/>
    <property type="molecule type" value="Genomic_DNA"/>
</dbReference>
<dbReference type="RefSeq" id="WP_000677233.1">
    <property type="nucleotide sequence ID" value="NC_008600.1"/>
</dbReference>
<dbReference type="SMR" id="A0R8A3"/>
<dbReference type="KEGG" id="btl:BALH_0026"/>
<dbReference type="HOGENOM" id="CLU_049131_0_2_9"/>
<dbReference type="GO" id="GO:0005829">
    <property type="term" value="C:cytosol"/>
    <property type="evidence" value="ECO:0007669"/>
    <property type="project" value="TreeGrafter"/>
</dbReference>
<dbReference type="GO" id="GO:0005524">
    <property type="term" value="F:ATP binding"/>
    <property type="evidence" value="ECO:0007669"/>
    <property type="project" value="UniProtKB-UniRule"/>
</dbReference>
<dbReference type="GO" id="GO:0004798">
    <property type="term" value="F:dTMP kinase activity"/>
    <property type="evidence" value="ECO:0007669"/>
    <property type="project" value="UniProtKB-UniRule"/>
</dbReference>
<dbReference type="GO" id="GO:0006233">
    <property type="term" value="P:dTDP biosynthetic process"/>
    <property type="evidence" value="ECO:0007669"/>
    <property type="project" value="InterPro"/>
</dbReference>
<dbReference type="GO" id="GO:0006235">
    <property type="term" value="P:dTTP biosynthetic process"/>
    <property type="evidence" value="ECO:0007669"/>
    <property type="project" value="UniProtKB-UniRule"/>
</dbReference>
<dbReference type="GO" id="GO:0006227">
    <property type="term" value="P:dUDP biosynthetic process"/>
    <property type="evidence" value="ECO:0007669"/>
    <property type="project" value="TreeGrafter"/>
</dbReference>
<dbReference type="CDD" id="cd01672">
    <property type="entry name" value="TMPK"/>
    <property type="match status" value="1"/>
</dbReference>
<dbReference type="FunFam" id="3.40.50.300:FF:000225">
    <property type="entry name" value="Thymidylate kinase"/>
    <property type="match status" value="1"/>
</dbReference>
<dbReference type="Gene3D" id="3.40.50.300">
    <property type="entry name" value="P-loop containing nucleotide triphosphate hydrolases"/>
    <property type="match status" value="1"/>
</dbReference>
<dbReference type="HAMAP" id="MF_00165">
    <property type="entry name" value="Thymidylate_kinase"/>
    <property type="match status" value="1"/>
</dbReference>
<dbReference type="InterPro" id="IPR027417">
    <property type="entry name" value="P-loop_NTPase"/>
</dbReference>
<dbReference type="InterPro" id="IPR039430">
    <property type="entry name" value="Thymidylate_kin-like_dom"/>
</dbReference>
<dbReference type="InterPro" id="IPR018095">
    <property type="entry name" value="Thymidylate_kin_CS"/>
</dbReference>
<dbReference type="InterPro" id="IPR018094">
    <property type="entry name" value="Thymidylate_kinase"/>
</dbReference>
<dbReference type="NCBIfam" id="TIGR00041">
    <property type="entry name" value="DTMP_kinase"/>
    <property type="match status" value="1"/>
</dbReference>
<dbReference type="PANTHER" id="PTHR10344">
    <property type="entry name" value="THYMIDYLATE KINASE"/>
    <property type="match status" value="1"/>
</dbReference>
<dbReference type="PANTHER" id="PTHR10344:SF4">
    <property type="entry name" value="UMP-CMP KINASE 2, MITOCHONDRIAL"/>
    <property type="match status" value="1"/>
</dbReference>
<dbReference type="Pfam" id="PF02223">
    <property type="entry name" value="Thymidylate_kin"/>
    <property type="match status" value="1"/>
</dbReference>
<dbReference type="SUPFAM" id="SSF52540">
    <property type="entry name" value="P-loop containing nucleoside triphosphate hydrolases"/>
    <property type="match status" value="1"/>
</dbReference>
<dbReference type="PROSITE" id="PS01331">
    <property type="entry name" value="THYMIDYLATE_KINASE"/>
    <property type="match status" value="1"/>
</dbReference>
<proteinExistence type="inferred from homology"/>